<protein>
    <recommendedName>
        <fullName>Peroxidase</fullName>
        <ecNumber>1.11.1.7</ecNumber>
    </recommendedName>
    <alternativeName>
        <fullName>WP2</fullName>
    </alternativeName>
</protein>
<dbReference type="EC" id="1.11.1.7"/>
<dbReference type="EMBL" id="X53675">
    <property type="protein sequence ID" value="CAA37713.1"/>
    <property type="molecule type" value="mRNA"/>
</dbReference>
<dbReference type="PIR" id="S13325">
    <property type="entry name" value="S13325"/>
</dbReference>
<dbReference type="SMR" id="Q05855"/>
<dbReference type="STRING" id="4565.Q05855"/>
<dbReference type="Allergome" id="1474">
    <property type="allergen name" value="Tri a Peroxidase"/>
</dbReference>
<dbReference type="PeroxiBase" id="468">
    <property type="entry name" value="TaPrx02-2A"/>
</dbReference>
<dbReference type="PaxDb" id="4565-Traes_2DS_2CCCA54C1.1"/>
<dbReference type="eggNOG" id="ENOG502QU1K">
    <property type="taxonomic scope" value="Eukaryota"/>
</dbReference>
<dbReference type="Proteomes" id="UP000019116">
    <property type="component" value="Unplaced"/>
</dbReference>
<dbReference type="ExpressionAtlas" id="Q05855">
    <property type="expression patterns" value="baseline and differential"/>
</dbReference>
<dbReference type="GO" id="GO:0005576">
    <property type="term" value="C:extracellular region"/>
    <property type="evidence" value="ECO:0007669"/>
    <property type="project" value="UniProtKB-SubCell"/>
</dbReference>
<dbReference type="GO" id="GO:0020037">
    <property type="term" value="F:heme binding"/>
    <property type="evidence" value="ECO:0007669"/>
    <property type="project" value="InterPro"/>
</dbReference>
<dbReference type="GO" id="GO:0140825">
    <property type="term" value="F:lactoperoxidase activity"/>
    <property type="evidence" value="ECO:0007669"/>
    <property type="project" value="UniProtKB-EC"/>
</dbReference>
<dbReference type="GO" id="GO:0046872">
    <property type="term" value="F:metal ion binding"/>
    <property type="evidence" value="ECO:0007669"/>
    <property type="project" value="UniProtKB-KW"/>
</dbReference>
<dbReference type="GO" id="GO:0042744">
    <property type="term" value="P:hydrogen peroxide catabolic process"/>
    <property type="evidence" value="ECO:0007669"/>
    <property type="project" value="UniProtKB-KW"/>
</dbReference>
<dbReference type="GO" id="GO:0006979">
    <property type="term" value="P:response to oxidative stress"/>
    <property type="evidence" value="ECO:0007669"/>
    <property type="project" value="InterPro"/>
</dbReference>
<dbReference type="CDD" id="cd00693">
    <property type="entry name" value="secretory_peroxidase"/>
    <property type="match status" value="1"/>
</dbReference>
<dbReference type="FunFam" id="1.10.420.10:FF:000001">
    <property type="entry name" value="Peroxidase"/>
    <property type="match status" value="1"/>
</dbReference>
<dbReference type="FunFam" id="1.10.520.10:FF:000009">
    <property type="entry name" value="Peroxidase"/>
    <property type="match status" value="1"/>
</dbReference>
<dbReference type="Gene3D" id="1.10.520.10">
    <property type="match status" value="1"/>
</dbReference>
<dbReference type="Gene3D" id="1.10.420.10">
    <property type="entry name" value="Peroxidase, domain 2"/>
    <property type="match status" value="1"/>
</dbReference>
<dbReference type="InterPro" id="IPR002016">
    <property type="entry name" value="Haem_peroxidase"/>
</dbReference>
<dbReference type="InterPro" id="IPR010255">
    <property type="entry name" value="Haem_peroxidase_sf"/>
</dbReference>
<dbReference type="InterPro" id="IPR000823">
    <property type="entry name" value="Peroxidase_pln"/>
</dbReference>
<dbReference type="InterPro" id="IPR019794">
    <property type="entry name" value="Peroxidases_AS"/>
</dbReference>
<dbReference type="InterPro" id="IPR019793">
    <property type="entry name" value="Peroxidases_heam-ligand_BS"/>
</dbReference>
<dbReference type="InterPro" id="IPR033905">
    <property type="entry name" value="Secretory_peroxidase"/>
</dbReference>
<dbReference type="PANTHER" id="PTHR31388:SF13">
    <property type="entry name" value="PEROXIDASE 2"/>
    <property type="match status" value="1"/>
</dbReference>
<dbReference type="PANTHER" id="PTHR31388">
    <property type="entry name" value="PEROXIDASE 72-RELATED"/>
    <property type="match status" value="1"/>
</dbReference>
<dbReference type="Pfam" id="PF00141">
    <property type="entry name" value="peroxidase"/>
    <property type="match status" value="1"/>
</dbReference>
<dbReference type="PRINTS" id="PR00458">
    <property type="entry name" value="PEROXIDASE"/>
</dbReference>
<dbReference type="PRINTS" id="PR00461">
    <property type="entry name" value="PLPEROXIDASE"/>
</dbReference>
<dbReference type="SUPFAM" id="SSF48113">
    <property type="entry name" value="Heme-dependent peroxidases"/>
    <property type="match status" value="1"/>
</dbReference>
<dbReference type="PROSITE" id="PS00435">
    <property type="entry name" value="PEROXIDASE_1"/>
    <property type="match status" value="1"/>
</dbReference>
<dbReference type="PROSITE" id="PS00436">
    <property type="entry name" value="PEROXIDASE_2"/>
    <property type="match status" value="1"/>
</dbReference>
<dbReference type="PROSITE" id="PS50873">
    <property type="entry name" value="PEROXIDASE_4"/>
    <property type="match status" value="1"/>
</dbReference>
<keyword id="KW-0106">Calcium</keyword>
<keyword id="KW-1015">Disulfide bond</keyword>
<keyword id="KW-0325">Glycoprotein</keyword>
<keyword id="KW-0349">Heme</keyword>
<keyword id="KW-0376">Hydrogen peroxide</keyword>
<keyword id="KW-0408">Iron</keyword>
<keyword id="KW-0479">Metal-binding</keyword>
<keyword id="KW-0560">Oxidoreductase</keyword>
<keyword id="KW-0575">Peroxidase</keyword>
<keyword id="KW-0873">Pyrrolidone carboxylic acid</keyword>
<keyword id="KW-1185">Reference proteome</keyword>
<keyword id="KW-0964">Secreted</keyword>
<keyword id="KW-0732">Signal</keyword>
<accession>Q05855</accession>
<proteinExistence type="evidence at transcript level"/>
<reference key="1">
    <citation type="journal article" date="1991" name="Plant Mol. Biol.">
        <title>Sequence and tissue-specific expression of a putative peroxidase gene from wheat (Triticum aestivum L.).</title>
        <authorList>
            <person name="Hertig C."/>
            <person name="Rebmann G."/>
            <person name="Bull J."/>
            <person name="Mauch F."/>
            <person name="Dudler R."/>
        </authorList>
    </citation>
    <scope>NUCLEOTIDE SEQUENCE [MRNA]</scope>
    <source>
        <strain>cv. Cheyenne</strain>
    </source>
</reference>
<comment type="function">
    <text>Removal of H(2)O(2), oxidation of toxic reductants, biosynthesis and degradation of lignin, suberization, auxin catabolism, response to environmental stresses such as wounding, pathogen attack and oxidative stress. These functions might be dependent on each isozyme/isoform in each plant tissue.</text>
</comment>
<comment type="function">
    <text>Involved in defense response to powdery meldew fungus.</text>
</comment>
<comment type="catalytic activity">
    <reaction>
        <text>2 a phenolic donor + H2O2 = 2 a phenolic radical donor + 2 H2O</text>
        <dbReference type="Rhea" id="RHEA:56136"/>
        <dbReference type="ChEBI" id="CHEBI:15377"/>
        <dbReference type="ChEBI" id="CHEBI:16240"/>
        <dbReference type="ChEBI" id="CHEBI:139520"/>
        <dbReference type="ChEBI" id="CHEBI:139521"/>
        <dbReference type="EC" id="1.11.1.7"/>
    </reaction>
</comment>
<comment type="cofactor">
    <cofactor>
        <name>Ca(2+)</name>
        <dbReference type="ChEBI" id="CHEBI:29108"/>
    </cofactor>
    <text>Binds 2 calcium ions per subunit.</text>
</comment>
<comment type="cofactor">
    <cofactor>
        <name>heme b</name>
        <dbReference type="ChEBI" id="CHEBI:60344"/>
    </cofactor>
    <text>Binds 1 heme b (iron(II)-protoporphyrin IX) group per subunit.</text>
</comment>
<comment type="subcellular location">
    <subcellularLocation>
        <location evidence="2">Secreted</location>
    </subcellularLocation>
</comment>
<comment type="tissue specificity">
    <text>Root.</text>
</comment>
<comment type="similarity">
    <text evidence="2">Belongs to the peroxidase family. Classical plant (class III) peroxidase subfamily.</text>
</comment>
<organism>
    <name type="scientific">Triticum aestivum</name>
    <name type="common">Wheat</name>
    <dbReference type="NCBI Taxonomy" id="4565"/>
    <lineage>
        <taxon>Eukaryota</taxon>
        <taxon>Viridiplantae</taxon>
        <taxon>Streptophyta</taxon>
        <taxon>Embryophyta</taxon>
        <taxon>Tracheophyta</taxon>
        <taxon>Spermatophyta</taxon>
        <taxon>Magnoliopsida</taxon>
        <taxon>Liliopsida</taxon>
        <taxon>Poales</taxon>
        <taxon>Poaceae</taxon>
        <taxon>BOP clade</taxon>
        <taxon>Pooideae</taxon>
        <taxon>Triticodae</taxon>
        <taxon>Triticeae</taxon>
        <taxon>Triticinae</taxon>
        <taxon>Triticum</taxon>
    </lineage>
</organism>
<feature type="signal peptide" evidence="1">
    <location>
        <begin position="1"/>
        <end position="23"/>
    </location>
</feature>
<feature type="chain" id="PRO_0000023757" description="Peroxidase">
    <location>
        <begin position="24"/>
        <end position="312"/>
    </location>
</feature>
<feature type="active site" description="Proton acceptor" evidence="2 3">
    <location>
        <position position="65"/>
    </location>
</feature>
<feature type="binding site" evidence="2">
    <location>
        <position position="66"/>
    </location>
    <ligand>
        <name>Ca(2+)</name>
        <dbReference type="ChEBI" id="CHEBI:29108"/>
        <label>1</label>
    </ligand>
</feature>
<feature type="binding site" evidence="2">
    <location>
        <position position="69"/>
    </location>
    <ligand>
        <name>Ca(2+)</name>
        <dbReference type="ChEBI" id="CHEBI:29108"/>
        <label>1</label>
    </ligand>
</feature>
<feature type="binding site" evidence="2">
    <location>
        <position position="71"/>
    </location>
    <ligand>
        <name>Ca(2+)</name>
        <dbReference type="ChEBI" id="CHEBI:29108"/>
        <label>1</label>
    </ligand>
</feature>
<feature type="binding site" evidence="2">
    <location>
        <position position="73"/>
    </location>
    <ligand>
        <name>Ca(2+)</name>
        <dbReference type="ChEBI" id="CHEBI:29108"/>
        <label>1</label>
    </ligand>
</feature>
<feature type="binding site" evidence="2">
    <location>
        <position position="155"/>
    </location>
    <ligand>
        <name>substrate</name>
    </ligand>
</feature>
<feature type="binding site" description="axial binding residue" evidence="2">
    <location>
        <position position="185"/>
    </location>
    <ligand>
        <name>heme b</name>
        <dbReference type="ChEBI" id="CHEBI:60344"/>
    </ligand>
    <ligandPart>
        <name>Fe</name>
        <dbReference type="ChEBI" id="CHEBI:18248"/>
    </ligandPart>
</feature>
<feature type="binding site" evidence="2">
    <location>
        <position position="186"/>
    </location>
    <ligand>
        <name>Ca(2+)</name>
        <dbReference type="ChEBI" id="CHEBI:29108"/>
        <label>2</label>
    </ligand>
</feature>
<feature type="binding site" evidence="2">
    <location>
        <position position="231"/>
    </location>
    <ligand>
        <name>Ca(2+)</name>
        <dbReference type="ChEBI" id="CHEBI:29108"/>
        <label>2</label>
    </ligand>
</feature>
<feature type="binding site" evidence="2">
    <location>
        <position position="234"/>
    </location>
    <ligand>
        <name>Ca(2+)</name>
        <dbReference type="ChEBI" id="CHEBI:29108"/>
        <label>2</label>
    </ligand>
</feature>
<feature type="binding site" evidence="2">
    <location>
        <position position="239"/>
    </location>
    <ligand>
        <name>Ca(2+)</name>
        <dbReference type="ChEBI" id="CHEBI:29108"/>
        <label>2</label>
    </ligand>
</feature>
<feature type="site" description="Transition state stabilizer" evidence="2">
    <location>
        <position position="61"/>
    </location>
</feature>
<feature type="modified residue" description="Pyrrolidone carboxylic acid" evidence="2">
    <location>
        <position position="24"/>
    </location>
</feature>
<feature type="glycosylation site" description="N-linked (GlcNAc...) asparagine" evidence="1">
    <location>
        <position position="262"/>
    </location>
</feature>
<feature type="disulfide bond" evidence="2">
    <location>
        <begin position="34"/>
        <end position="107"/>
    </location>
</feature>
<feature type="disulfide bond" evidence="2">
    <location>
        <begin position="67"/>
        <end position="70"/>
    </location>
</feature>
<feature type="disulfide bond" evidence="2">
    <location>
        <begin position="113"/>
        <end position="307"/>
    </location>
</feature>
<feature type="disulfide bond" evidence="2">
    <location>
        <begin position="192"/>
        <end position="218"/>
    </location>
</feature>
<evidence type="ECO:0000255" key="1"/>
<evidence type="ECO:0000255" key="2">
    <source>
        <dbReference type="PROSITE-ProRule" id="PRU00297"/>
    </source>
</evidence>
<evidence type="ECO:0000255" key="3">
    <source>
        <dbReference type="PROSITE-ProRule" id="PRU10012"/>
    </source>
</evidence>
<name>PER1_WHEAT</name>
<sequence>MAMGSASCISLVVLVALATAASGQLSSTFYDTSCPRALVAIKSGVAAAVSSDPRMGASLLRLHFHDCFGCDASVLLTGMEQNAGPNVGSLRGFGVIDNIKTQLESVCKQTVSCADILTVAARDSVVALGGPSWTVPLGRRDSTTASASLANSDLPGPSSSRSQLEAAFLKKNLNTVDMVALSGAHTIGKAQCSNFRTRIYGGDTNINTAFATSLKANCPQSGGNTNLANLDTMTPNAFDNAYYTNLLSQKGLLHSDQVLFNNETTDNTVRNFASNAAAFSSAFTTAMIKMGNIAPLTGTQGQIRLSCSKVNS</sequence>